<comment type="function">
    <text evidence="1">Catalyzes the reversible phosphatidyl group transfer from one phosphatidylglycerol molecule to another to form cardiolipin (CL) (diphosphatidylglycerol) and glycerol.</text>
</comment>
<comment type="catalytic activity">
    <reaction evidence="1">
        <text>2 a 1,2-diacyl-sn-glycero-3-phospho-(1'-sn-glycerol) = a cardiolipin + glycerol</text>
        <dbReference type="Rhea" id="RHEA:31451"/>
        <dbReference type="ChEBI" id="CHEBI:17754"/>
        <dbReference type="ChEBI" id="CHEBI:62237"/>
        <dbReference type="ChEBI" id="CHEBI:64716"/>
    </reaction>
</comment>
<comment type="subcellular location">
    <subcellularLocation>
        <location evidence="1">Cell inner membrane</location>
        <topology evidence="1">Multi-pass membrane protein</topology>
    </subcellularLocation>
</comment>
<comment type="similarity">
    <text evidence="1">Belongs to the phospholipase D family. Cardiolipin synthase subfamily. ClsA sub-subfamily.</text>
</comment>
<name>CLSA_SALSV</name>
<gene>
    <name evidence="1" type="primary">clsA</name>
    <name type="synonym">cls</name>
    <name type="ordered locus">SeSA_A1873</name>
</gene>
<sequence length="486" mass="54734">MTTFYTVVSWLVILGYWVLIAGVTLRILMKRRAVPSAMAWLLIIYILPLVGIIAYLSVGELHLGKRRAERARAMWPSTAKWLNDLKACKHIFAQENSSVASSLFKLCERRQGIAGVKGNQLQLLTDSDDVMQALIRDIQLARHNIEMVFYIWQPGGMADQVAESLMAAARRGIHCRLMLDSAGSVAFFRSPWAAMMRNAGIEVVEALKVNLMRVFLRRMDLRQHRKMVMIDNYIAYTGSMNMVDPRFFKQDAGVGQWVDLMARMEGPVATAMGIVYSCDWEIETGKRILPPPPDVNIMPFEQASGHTIHTIASGPGFPEDLIHQALLTATYAAREYLIMTTPYFVPSDDLLHAICTAAQRGVDVSIILPRKNDSLLVGWASRAFFSELLAAGVKIYQFEGGLLHTKSVLVDGELSLVGTVNLDMRSLWLNFEITLVIDDTGFGADLAAVQDDYISRSRLLDARLWVKRPLWQRITERLFYFFSPLL</sequence>
<accession>B4TX53</accession>
<organism>
    <name type="scientific">Salmonella schwarzengrund (strain CVM19633)</name>
    <dbReference type="NCBI Taxonomy" id="439843"/>
    <lineage>
        <taxon>Bacteria</taxon>
        <taxon>Pseudomonadati</taxon>
        <taxon>Pseudomonadota</taxon>
        <taxon>Gammaproteobacteria</taxon>
        <taxon>Enterobacterales</taxon>
        <taxon>Enterobacteriaceae</taxon>
        <taxon>Salmonella</taxon>
    </lineage>
</organism>
<keyword id="KW-0997">Cell inner membrane</keyword>
<keyword id="KW-1003">Cell membrane</keyword>
<keyword id="KW-0444">Lipid biosynthesis</keyword>
<keyword id="KW-0443">Lipid metabolism</keyword>
<keyword id="KW-0472">Membrane</keyword>
<keyword id="KW-0594">Phospholipid biosynthesis</keyword>
<keyword id="KW-1208">Phospholipid metabolism</keyword>
<keyword id="KW-0677">Repeat</keyword>
<keyword id="KW-0808">Transferase</keyword>
<keyword id="KW-0812">Transmembrane</keyword>
<keyword id="KW-1133">Transmembrane helix</keyword>
<evidence type="ECO:0000255" key="1">
    <source>
        <dbReference type="HAMAP-Rule" id="MF_00190"/>
    </source>
</evidence>
<dbReference type="EC" id="2.7.8.-" evidence="1"/>
<dbReference type="EMBL" id="CP001127">
    <property type="protein sequence ID" value="ACF90054.1"/>
    <property type="molecule type" value="Genomic_DNA"/>
</dbReference>
<dbReference type="RefSeq" id="WP_000206886.1">
    <property type="nucleotide sequence ID" value="NC_011094.1"/>
</dbReference>
<dbReference type="SMR" id="B4TX53"/>
<dbReference type="KEGG" id="sew:SeSA_A1873"/>
<dbReference type="HOGENOM" id="CLU_038053_1_0_6"/>
<dbReference type="Proteomes" id="UP000001865">
    <property type="component" value="Chromosome"/>
</dbReference>
<dbReference type="GO" id="GO:0005886">
    <property type="term" value="C:plasma membrane"/>
    <property type="evidence" value="ECO:0007669"/>
    <property type="project" value="UniProtKB-SubCell"/>
</dbReference>
<dbReference type="GO" id="GO:0008808">
    <property type="term" value="F:cardiolipin synthase activity"/>
    <property type="evidence" value="ECO:0007669"/>
    <property type="project" value="InterPro"/>
</dbReference>
<dbReference type="GO" id="GO:0032049">
    <property type="term" value="P:cardiolipin biosynthetic process"/>
    <property type="evidence" value="ECO:0007669"/>
    <property type="project" value="InterPro"/>
</dbReference>
<dbReference type="CDD" id="cd09152">
    <property type="entry name" value="PLDc_EcCLS_like_1"/>
    <property type="match status" value="1"/>
</dbReference>
<dbReference type="CDD" id="cd09158">
    <property type="entry name" value="PLDc_EcCLS_like_2"/>
    <property type="match status" value="1"/>
</dbReference>
<dbReference type="FunFam" id="3.30.870.10:FF:000002">
    <property type="entry name" value="Cardiolipin synthase A"/>
    <property type="match status" value="1"/>
</dbReference>
<dbReference type="FunFam" id="3.30.870.10:FF:000003">
    <property type="entry name" value="Cardiolipin synthase A"/>
    <property type="match status" value="1"/>
</dbReference>
<dbReference type="Gene3D" id="3.30.870.10">
    <property type="entry name" value="Endonuclease Chain A"/>
    <property type="match status" value="2"/>
</dbReference>
<dbReference type="HAMAP" id="MF_00190">
    <property type="entry name" value="Cardiolipin_synth_ClsA"/>
    <property type="match status" value="1"/>
</dbReference>
<dbReference type="InterPro" id="IPR022924">
    <property type="entry name" value="Cardiolipin_synthase"/>
</dbReference>
<dbReference type="InterPro" id="IPR030840">
    <property type="entry name" value="CL_synthase_A"/>
</dbReference>
<dbReference type="InterPro" id="IPR027379">
    <property type="entry name" value="CLS_N"/>
</dbReference>
<dbReference type="InterPro" id="IPR025202">
    <property type="entry name" value="PLD-like_dom"/>
</dbReference>
<dbReference type="InterPro" id="IPR001736">
    <property type="entry name" value="PLipase_D/transphosphatidylase"/>
</dbReference>
<dbReference type="NCBIfam" id="TIGR04265">
    <property type="entry name" value="bac_cardiolipin"/>
    <property type="match status" value="1"/>
</dbReference>
<dbReference type="PANTHER" id="PTHR21248">
    <property type="entry name" value="CARDIOLIPIN SYNTHASE"/>
    <property type="match status" value="1"/>
</dbReference>
<dbReference type="PANTHER" id="PTHR21248:SF22">
    <property type="entry name" value="PHOSPHOLIPASE D"/>
    <property type="match status" value="1"/>
</dbReference>
<dbReference type="Pfam" id="PF13091">
    <property type="entry name" value="PLDc_2"/>
    <property type="match status" value="2"/>
</dbReference>
<dbReference type="Pfam" id="PF13396">
    <property type="entry name" value="PLDc_N"/>
    <property type="match status" value="1"/>
</dbReference>
<dbReference type="SMART" id="SM00155">
    <property type="entry name" value="PLDc"/>
    <property type="match status" value="2"/>
</dbReference>
<dbReference type="SUPFAM" id="SSF56024">
    <property type="entry name" value="Phospholipase D/nuclease"/>
    <property type="match status" value="2"/>
</dbReference>
<dbReference type="PROSITE" id="PS50035">
    <property type="entry name" value="PLD"/>
    <property type="match status" value="2"/>
</dbReference>
<proteinExistence type="inferred from homology"/>
<feature type="chain" id="PRO_1000098918" description="Cardiolipin synthase A">
    <location>
        <begin position="1"/>
        <end position="486"/>
    </location>
</feature>
<feature type="transmembrane region" description="Helical" evidence="1">
    <location>
        <begin position="3"/>
        <end position="23"/>
    </location>
</feature>
<feature type="transmembrane region" description="Helical" evidence="1">
    <location>
        <begin position="38"/>
        <end position="58"/>
    </location>
</feature>
<feature type="domain" description="PLD phosphodiesterase 1" evidence="1">
    <location>
        <begin position="219"/>
        <end position="246"/>
    </location>
</feature>
<feature type="domain" description="PLD phosphodiesterase 2" evidence="1">
    <location>
        <begin position="399"/>
        <end position="426"/>
    </location>
</feature>
<feature type="active site" evidence="1">
    <location>
        <position position="224"/>
    </location>
</feature>
<feature type="active site" evidence="1">
    <location>
        <position position="226"/>
    </location>
</feature>
<feature type="active site" evidence="1">
    <location>
        <position position="231"/>
    </location>
</feature>
<feature type="active site" evidence="1">
    <location>
        <position position="404"/>
    </location>
</feature>
<feature type="active site" evidence="1">
    <location>
        <position position="406"/>
    </location>
</feature>
<feature type="active site" evidence="1">
    <location>
        <position position="411"/>
    </location>
</feature>
<reference key="1">
    <citation type="journal article" date="2011" name="J. Bacteriol.">
        <title>Comparative genomics of 28 Salmonella enterica isolates: evidence for CRISPR-mediated adaptive sublineage evolution.</title>
        <authorList>
            <person name="Fricke W.F."/>
            <person name="Mammel M.K."/>
            <person name="McDermott P.F."/>
            <person name="Tartera C."/>
            <person name="White D.G."/>
            <person name="Leclerc J.E."/>
            <person name="Ravel J."/>
            <person name="Cebula T.A."/>
        </authorList>
    </citation>
    <scope>NUCLEOTIDE SEQUENCE [LARGE SCALE GENOMIC DNA]</scope>
    <source>
        <strain>CVM19633</strain>
    </source>
</reference>
<protein>
    <recommendedName>
        <fullName evidence="1">Cardiolipin synthase A</fullName>
        <shortName evidence="1">CL synthase</shortName>
        <ecNumber evidence="1">2.7.8.-</ecNumber>
    </recommendedName>
</protein>